<reference key="1">
    <citation type="journal article" date="2006" name="Lancet">
        <title>Complete genome sequence of USA300, an epidemic clone of community-acquired meticillin-resistant Staphylococcus aureus.</title>
        <authorList>
            <person name="Diep B.A."/>
            <person name="Gill S.R."/>
            <person name="Chang R.F."/>
            <person name="Phan T.H."/>
            <person name="Chen J.H."/>
            <person name="Davidson M.G."/>
            <person name="Lin F."/>
            <person name="Lin J."/>
            <person name="Carleton H.A."/>
            <person name="Mongodin E.F."/>
            <person name="Sensabaugh G.F."/>
            <person name="Perdreau-Remington F."/>
        </authorList>
    </citation>
    <scope>NUCLEOTIDE SEQUENCE [LARGE SCALE GENOMIC DNA]</scope>
    <source>
        <strain>USA300</strain>
    </source>
</reference>
<accession>Q2FK46</accession>
<protein>
    <recommendedName>
        <fullName>Sensor protein kinase HptS</fullName>
        <ecNumber>2.7.13.3</ecNumber>
    </recommendedName>
</protein>
<dbReference type="EC" id="2.7.13.3"/>
<dbReference type="EMBL" id="CP000255">
    <property type="protein sequence ID" value="ABD21147.1"/>
    <property type="molecule type" value="Genomic_DNA"/>
</dbReference>
<dbReference type="RefSeq" id="WP_000127982.1">
    <property type="nucleotide sequence ID" value="NZ_CP027476.1"/>
</dbReference>
<dbReference type="SMR" id="Q2FK46"/>
<dbReference type="KEGG" id="saa:SAUSA300_0218"/>
<dbReference type="HOGENOM" id="CLU_525720_0_0_9"/>
<dbReference type="OMA" id="LAHTENQ"/>
<dbReference type="Proteomes" id="UP000001939">
    <property type="component" value="Chromosome"/>
</dbReference>
<dbReference type="GO" id="GO:0005886">
    <property type="term" value="C:plasma membrane"/>
    <property type="evidence" value="ECO:0007669"/>
    <property type="project" value="UniProtKB-SubCell"/>
</dbReference>
<dbReference type="GO" id="GO:0005524">
    <property type="term" value="F:ATP binding"/>
    <property type="evidence" value="ECO:0007669"/>
    <property type="project" value="UniProtKB-KW"/>
</dbReference>
<dbReference type="GO" id="GO:0000155">
    <property type="term" value="F:phosphorelay sensor kinase activity"/>
    <property type="evidence" value="ECO:0007669"/>
    <property type="project" value="InterPro"/>
</dbReference>
<dbReference type="Gene3D" id="3.30.565.10">
    <property type="entry name" value="Histidine kinase-like ATPase, C-terminal domain"/>
    <property type="match status" value="1"/>
</dbReference>
<dbReference type="InterPro" id="IPR050640">
    <property type="entry name" value="Bact_2-comp_sensor_kinase"/>
</dbReference>
<dbReference type="InterPro" id="IPR036890">
    <property type="entry name" value="HATPase_C_sf"/>
</dbReference>
<dbReference type="InterPro" id="IPR010559">
    <property type="entry name" value="Sig_transdc_His_kin_internal"/>
</dbReference>
<dbReference type="PANTHER" id="PTHR34220">
    <property type="entry name" value="SENSOR HISTIDINE KINASE YPDA"/>
    <property type="match status" value="1"/>
</dbReference>
<dbReference type="PANTHER" id="PTHR34220:SF11">
    <property type="entry name" value="SENSOR PROTEIN KINASE HPTS"/>
    <property type="match status" value="1"/>
</dbReference>
<dbReference type="Pfam" id="PF02518">
    <property type="entry name" value="HATPase_c"/>
    <property type="match status" value="1"/>
</dbReference>
<dbReference type="Pfam" id="PF06580">
    <property type="entry name" value="His_kinase"/>
    <property type="match status" value="1"/>
</dbReference>
<dbReference type="SUPFAM" id="SSF55874">
    <property type="entry name" value="ATPase domain of HSP90 chaperone/DNA topoisomerase II/histidine kinase"/>
    <property type="match status" value="1"/>
</dbReference>
<organism>
    <name type="scientific">Staphylococcus aureus (strain USA300)</name>
    <dbReference type="NCBI Taxonomy" id="367830"/>
    <lineage>
        <taxon>Bacteria</taxon>
        <taxon>Bacillati</taxon>
        <taxon>Bacillota</taxon>
        <taxon>Bacilli</taxon>
        <taxon>Bacillales</taxon>
        <taxon>Staphylococcaceae</taxon>
        <taxon>Staphylococcus</taxon>
    </lineage>
</organism>
<proteinExistence type="inferred from homology"/>
<comment type="function">
    <text evidence="2">Member of the two-component regulatory system HptS/HptR that regulates genes involved in hexose phosphate transport system in response to changes in extracellular phosphate sources. May act as a sensor protein kinase which is autophosphorylated at a histidine residue and transfers its phosphate group to the conserved aspartic acid residue in the regulatory domain of HptS. In turn, HptS antagonizes CcpA-dependent transcription of a subset of CcpA-regulated genes involved in antibiotic susceptibility.</text>
</comment>
<comment type="catalytic activity">
    <reaction>
        <text>ATP + protein L-histidine = ADP + protein N-phospho-L-histidine.</text>
        <dbReference type="EC" id="2.7.13.3"/>
    </reaction>
</comment>
<comment type="subcellular location">
    <subcellularLocation>
        <location evidence="4">Cell membrane</location>
        <topology evidence="4">Multi-pass membrane protein</topology>
    </subcellularLocation>
</comment>
<comment type="PTM">
    <text evidence="1">Autophosphorylated.</text>
</comment>
<evidence type="ECO:0000250" key="1"/>
<evidence type="ECO:0000250" key="2">
    <source>
        <dbReference type="UniProtKB" id="Q2G1E0"/>
    </source>
</evidence>
<evidence type="ECO:0000255" key="3"/>
<evidence type="ECO:0000305" key="4"/>
<gene>
    <name type="primary">hptS</name>
    <name type="ordered locus">SAUSA300_0218</name>
</gene>
<feature type="chain" id="PRO_0000299127" description="Sensor protein kinase HptS">
    <location>
        <begin position="1"/>
        <end position="518"/>
    </location>
</feature>
<feature type="transmembrane region" description="Helical" evidence="3">
    <location>
        <begin position="20"/>
        <end position="40"/>
    </location>
</feature>
<feature type="transmembrane region" description="Helical" evidence="3">
    <location>
        <begin position="222"/>
        <end position="242"/>
    </location>
</feature>
<feature type="domain" description="Histidine kinase">
    <location>
        <begin position="297"/>
        <end position="513"/>
    </location>
</feature>
<feature type="modified residue" description="Phosphohistidine; by autocatalysis" evidence="1">
    <location>
        <position position="325"/>
    </location>
</feature>
<keyword id="KW-0067">ATP-binding</keyword>
<keyword id="KW-1003">Cell membrane</keyword>
<keyword id="KW-0418">Kinase</keyword>
<keyword id="KW-0472">Membrane</keyword>
<keyword id="KW-0547">Nucleotide-binding</keyword>
<keyword id="KW-0597">Phosphoprotein</keyword>
<keyword id="KW-0808">Transferase</keyword>
<keyword id="KW-0812">Transmembrane</keyword>
<keyword id="KW-1133">Transmembrane helix</keyword>
<keyword id="KW-0902">Two-component regulatory system</keyword>
<name>HPTS_STAA3</name>
<sequence length="518" mass="61047">MTAYKPYRHQLRRSLFASTIFPVFLVIIIGLVSFYAIYIWIEHRTIHQHVDESQSSLHHTEKQIQTFITQHNNSFQELDLTNHHDVTATKRELLKLIHQQPATLYYELSGPNQFITNNYEHLNTKNMYLFSTHQLKFKNSTYMLKIYMANTPRLSEIKKDNRQFALIVDQYDNILYANDDRFTIGEKYRPQQFGFMNESVKLNHADHRLIIYKDIHENIEDGITLLIVMAVVLVLLVIFGFISADNMAKRQTKDIETIIQKIYYAKNRHLGTYTPLKNNSELEEINNYIYDLFESNEQLIHSIEHTERRLRDIQLKEIERQFQPHFLFNTMQTIQYLITLSPKLAQTVVQQLSQMLRYSLRTNSHTVELNEELNYIEQYVAIQNIRFDDMIKLHIESSEEARHQTIGKMMLQPLIENAIKHGRDTESLDITIRLTLARQNLHVLVCDNGIGMSSSRLQYVRQSLNNDVFDTKHLGLNHLHNKAMIQYGSHARLHIFSKRNQGTLICYKIPLSRGNVDV</sequence>